<feature type="chain" id="PRO_0000165531" description="Holliday junction branch migration complex subunit RuvB">
    <location>
        <begin position="1"/>
        <end position="338"/>
    </location>
</feature>
<feature type="region of interest" description="Large ATPase domain (RuvB-L)" evidence="1">
    <location>
        <begin position="1"/>
        <end position="184"/>
    </location>
</feature>
<feature type="region of interest" description="Small ATPAse domain (RuvB-S)" evidence="1">
    <location>
        <begin position="185"/>
        <end position="255"/>
    </location>
</feature>
<feature type="region of interest" description="Head domain (RuvB-H)" evidence="1">
    <location>
        <begin position="258"/>
        <end position="338"/>
    </location>
</feature>
<feature type="binding site" evidence="1">
    <location>
        <position position="23"/>
    </location>
    <ligand>
        <name>ATP</name>
        <dbReference type="ChEBI" id="CHEBI:30616"/>
    </ligand>
</feature>
<feature type="binding site" evidence="1">
    <location>
        <position position="24"/>
    </location>
    <ligand>
        <name>ATP</name>
        <dbReference type="ChEBI" id="CHEBI:30616"/>
    </ligand>
</feature>
<feature type="binding site" evidence="1">
    <location>
        <position position="65"/>
    </location>
    <ligand>
        <name>ATP</name>
        <dbReference type="ChEBI" id="CHEBI:30616"/>
    </ligand>
</feature>
<feature type="binding site" evidence="1">
    <location>
        <position position="68"/>
    </location>
    <ligand>
        <name>ATP</name>
        <dbReference type="ChEBI" id="CHEBI:30616"/>
    </ligand>
</feature>
<feature type="binding site" evidence="1">
    <location>
        <position position="69"/>
    </location>
    <ligand>
        <name>ATP</name>
        <dbReference type="ChEBI" id="CHEBI:30616"/>
    </ligand>
</feature>
<feature type="binding site" evidence="1">
    <location>
        <position position="69"/>
    </location>
    <ligand>
        <name>Mg(2+)</name>
        <dbReference type="ChEBI" id="CHEBI:18420"/>
    </ligand>
</feature>
<feature type="binding site" evidence="1">
    <location>
        <position position="70"/>
    </location>
    <ligand>
        <name>ATP</name>
        <dbReference type="ChEBI" id="CHEBI:30616"/>
    </ligand>
</feature>
<feature type="binding site" evidence="1">
    <location>
        <begin position="131"/>
        <end position="133"/>
    </location>
    <ligand>
        <name>ATP</name>
        <dbReference type="ChEBI" id="CHEBI:30616"/>
    </ligand>
</feature>
<feature type="binding site" evidence="1">
    <location>
        <position position="174"/>
    </location>
    <ligand>
        <name>ATP</name>
        <dbReference type="ChEBI" id="CHEBI:30616"/>
    </ligand>
</feature>
<feature type="binding site" evidence="1">
    <location>
        <position position="184"/>
    </location>
    <ligand>
        <name>ATP</name>
        <dbReference type="ChEBI" id="CHEBI:30616"/>
    </ligand>
</feature>
<feature type="binding site" evidence="1">
    <location>
        <position position="221"/>
    </location>
    <ligand>
        <name>ATP</name>
        <dbReference type="ChEBI" id="CHEBI:30616"/>
    </ligand>
</feature>
<feature type="binding site" evidence="1">
    <location>
        <position position="313"/>
    </location>
    <ligand>
        <name>DNA</name>
        <dbReference type="ChEBI" id="CHEBI:16991"/>
    </ligand>
</feature>
<feature type="binding site" evidence="1">
    <location>
        <position position="318"/>
    </location>
    <ligand>
        <name>DNA</name>
        <dbReference type="ChEBI" id="CHEBI:16991"/>
    </ligand>
</feature>
<comment type="function">
    <text evidence="1">The RuvA-RuvB-RuvC complex processes Holliday junction (HJ) DNA during genetic recombination and DNA repair, while the RuvA-RuvB complex plays an important role in the rescue of blocked DNA replication forks via replication fork reversal (RFR). RuvA specifically binds to HJ cruciform DNA, conferring on it an open structure. The RuvB hexamer acts as an ATP-dependent pump, pulling dsDNA into and through the RuvAB complex. RuvB forms 2 homohexamers on either side of HJ DNA bound by 1 or 2 RuvA tetramers; 4 subunits per hexamer contact DNA at a time. Coordinated motions by a converter formed by DNA-disengaged RuvB subunits stimulates ATP hydrolysis and nucleotide exchange. Immobilization of the converter enables RuvB to convert the ATP-contained energy into a lever motion, pulling 2 nucleotides of DNA out of the RuvA tetramer per ATP hydrolyzed, thus driving DNA branch migration. The RuvB motors rotate together with the DNA substrate, which together with the progressing nucleotide cycle form the mechanistic basis for DNA recombination by continuous HJ branch migration. Branch migration allows RuvC to scan DNA until it finds its consensus sequence, where it cleaves and resolves cruciform DNA.</text>
</comment>
<comment type="catalytic activity">
    <reaction evidence="1">
        <text>ATP + H2O = ADP + phosphate + H(+)</text>
        <dbReference type="Rhea" id="RHEA:13065"/>
        <dbReference type="ChEBI" id="CHEBI:15377"/>
        <dbReference type="ChEBI" id="CHEBI:15378"/>
        <dbReference type="ChEBI" id="CHEBI:30616"/>
        <dbReference type="ChEBI" id="CHEBI:43474"/>
        <dbReference type="ChEBI" id="CHEBI:456216"/>
    </reaction>
</comment>
<comment type="subunit">
    <text evidence="1">Homohexamer. Forms an RuvA(8)-RuvB(12)-Holliday junction (HJ) complex. HJ DNA is sandwiched between 2 RuvA tetramers; dsDNA enters through RuvA and exits via RuvB. An RuvB hexamer assembles on each DNA strand where it exits the tetramer. Each RuvB hexamer is contacted by two RuvA subunits (via domain III) on 2 adjacent RuvB subunits; this complex drives branch migration. In the full resolvosome a probable DNA-RuvA(4)-RuvB(12)-RuvC(2) complex forms which resolves the HJ.</text>
</comment>
<comment type="subcellular location">
    <subcellularLocation>
        <location evidence="1">Cytoplasm</location>
    </subcellularLocation>
</comment>
<comment type="domain">
    <text evidence="1">Has 3 domains, the large (RuvB-L) and small ATPase (RuvB-S) domains and the C-terminal head (RuvB-H) domain. The head domain binds DNA, while the ATPase domains jointly bind ATP, ADP or are empty depending on the state of the subunit in the translocation cycle. During a single DNA translocation step the structure of each domain remains the same, but their relative positions change.</text>
</comment>
<comment type="similarity">
    <text evidence="1">Belongs to the RuvB family.</text>
</comment>
<evidence type="ECO:0000255" key="1">
    <source>
        <dbReference type="HAMAP-Rule" id="MF_00016"/>
    </source>
</evidence>
<reference key="1">
    <citation type="journal article" date="2003" name="Science">
        <title>Role of mobile DNA in the evolution of vancomycin-resistant Enterococcus faecalis.</title>
        <authorList>
            <person name="Paulsen I.T."/>
            <person name="Banerjei L."/>
            <person name="Myers G.S.A."/>
            <person name="Nelson K.E."/>
            <person name="Seshadri R."/>
            <person name="Read T.D."/>
            <person name="Fouts D.E."/>
            <person name="Eisen J.A."/>
            <person name="Gill S.R."/>
            <person name="Heidelberg J.F."/>
            <person name="Tettelin H."/>
            <person name="Dodson R.J."/>
            <person name="Umayam L.A."/>
            <person name="Brinkac L.M."/>
            <person name="Beanan M.J."/>
            <person name="Daugherty S.C."/>
            <person name="DeBoy R.T."/>
            <person name="Durkin S.A."/>
            <person name="Kolonay J.F."/>
            <person name="Madupu R."/>
            <person name="Nelson W.C."/>
            <person name="Vamathevan J.J."/>
            <person name="Tran B."/>
            <person name="Upton J."/>
            <person name="Hansen T."/>
            <person name="Shetty J."/>
            <person name="Khouri H.M."/>
            <person name="Utterback T.R."/>
            <person name="Radune D."/>
            <person name="Ketchum K.A."/>
            <person name="Dougherty B.A."/>
            <person name="Fraser C.M."/>
        </authorList>
    </citation>
    <scope>NUCLEOTIDE SEQUENCE [LARGE SCALE GENOMIC DNA]</scope>
    <source>
        <strain>ATCC 700802 / V583</strain>
    </source>
</reference>
<keyword id="KW-0067">ATP-binding</keyword>
<keyword id="KW-0963">Cytoplasm</keyword>
<keyword id="KW-0227">DNA damage</keyword>
<keyword id="KW-0233">DNA recombination</keyword>
<keyword id="KW-0234">DNA repair</keyword>
<keyword id="KW-0238">DNA-binding</keyword>
<keyword id="KW-0378">Hydrolase</keyword>
<keyword id="KW-0547">Nucleotide-binding</keyword>
<keyword id="KW-1185">Reference proteome</keyword>
<gene>
    <name evidence="1" type="primary">ruvB</name>
    <name type="ordered locus">EF_0067</name>
</gene>
<protein>
    <recommendedName>
        <fullName evidence="1">Holliday junction branch migration complex subunit RuvB</fullName>
        <ecNumber evidence="1">3.6.4.-</ecNumber>
    </recommendedName>
</protein>
<sequence>MTEEERLLSAASQEAEASIEKSLRPQFLAQYIGQDKVKQELTIYIEAAKNRNEALDHTLLYGPPGLGKTTMAMVIANEMNVNIRTTSGPAIERAGDLVAILNELEPGDVLFIDEIHRLPRVVEEMLYSAMEDFYIDIMVGQGTTAHPVHFPLPPFTLVGATTRAGMLSAPLRDRFGIISHMEYYQEQDLKEIVLRSADIFQTEIFEEGAFEIARRSRGTPRIANRLLKRVRDFAQVQSDGKIDRAIADKALTLLQVDHQGLDYVDQKLLKTMIDLYGGGPVGLSTLSVNIGEETETVEDMYEPYLIQKGFIKRTPRGRIATPFAYAHFGYDYLEGRKN</sequence>
<proteinExistence type="inferred from homology"/>
<dbReference type="EC" id="3.6.4.-" evidence="1"/>
<dbReference type="EMBL" id="AE016830">
    <property type="protein sequence ID" value="AAO79947.1"/>
    <property type="molecule type" value="Genomic_DNA"/>
</dbReference>
<dbReference type="RefSeq" id="NP_813875.1">
    <property type="nucleotide sequence ID" value="NC_004668.1"/>
</dbReference>
<dbReference type="RefSeq" id="WP_002381340.1">
    <property type="nucleotide sequence ID" value="NZ_KE136524.1"/>
</dbReference>
<dbReference type="SMR" id="Q839T5"/>
<dbReference type="STRING" id="226185.EF_0067"/>
<dbReference type="EnsemblBacteria" id="AAO79947">
    <property type="protein sequence ID" value="AAO79947"/>
    <property type="gene ID" value="EF_0067"/>
</dbReference>
<dbReference type="GeneID" id="60892622"/>
<dbReference type="KEGG" id="efa:EF0067"/>
<dbReference type="PATRIC" id="fig|226185.45.peg.190"/>
<dbReference type="eggNOG" id="COG2255">
    <property type="taxonomic scope" value="Bacteria"/>
</dbReference>
<dbReference type="HOGENOM" id="CLU_055599_1_0_9"/>
<dbReference type="Proteomes" id="UP000001415">
    <property type="component" value="Chromosome"/>
</dbReference>
<dbReference type="GO" id="GO:0005737">
    <property type="term" value="C:cytoplasm"/>
    <property type="evidence" value="ECO:0007669"/>
    <property type="project" value="UniProtKB-SubCell"/>
</dbReference>
<dbReference type="GO" id="GO:0048476">
    <property type="term" value="C:Holliday junction resolvase complex"/>
    <property type="evidence" value="ECO:0007669"/>
    <property type="project" value="UniProtKB-UniRule"/>
</dbReference>
<dbReference type="GO" id="GO:0005524">
    <property type="term" value="F:ATP binding"/>
    <property type="evidence" value="ECO:0007669"/>
    <property type="project" value="UniProtKB-UniRule"/>
</dbReference>
<dbReference type="GO" id="GO:0016887">
    <property type="term" value="F:ATP hydrolysis activity"/>
    <property type="evidence" value="ECO:0007669"/>
    <property type="project" value="InterPro"/>
</dbReference>
<dbReference type="GO" id="GO:0000400">
    <property type="term" value="F:four-way junction DNA binding"/>
    <property type="evidence" value="ECO:0007669"/>
    <property type="project" value="UniProtKB-UniRule"/>
</dbReference>
<dbReference type="GO" id="GO:0009378">
    <property type="term" value="F:four-way junction helicase activity"/>
    <property type="evidence" value="ECO:0007669"/>
    <property type="project" value="InterPro"/>
</dbReference>
<dbReference type="GO" id="GO:0006310">
    <property type="term" value="P:DNA recombination"/>
    <property type="evidence" value="ECO:0007669"/>
    <property type="project" value="UniProtKB-UniRule"/>
</dbReference>
<dbReference type="GO" id="GO:0006281">
    <property type="term" value="P:DNA repair"/>
    <property type="evidence" value="ECO:0007669"/>
    <property type="project" value="UniProtKB-UniRule"/>
</dbReference>
<dbReference type="CDD" id="cd00009">
    <property type="entry name" value="AAA"/>
    <property type="match status" value="1"/>
</dbReference>
<dbReference type="Gene3D" id="1.10.8.60">
    <property type="match status" value="1"/>
</dbReference>
<dbReference type="Gene3D" id="3.40.50.300">
    <property type="entry name" value="P-loop containing nucleotide triphosphate hydrolases"/>
    <property type="match status" value="1"/>
</dbReference>
<dbReference type="Gene3D" id="1.10.10.10">
    <property type="entry name" value="Winged helix-like DNA-binding domain superfamily/Winged helix DNA-binding domain"/>
    <property type="match status" value="1"/>
</dbReference>
<dbReference type="HAMAP" id="MF_00016">
    <property type="entry name" value="DNA_HJ_migration_RuvB"/>
    <property type="match status" value="1"/>
</dbReference>
<dbReference type="InterPro" id="IPR003593">
    <property type="entry name" value="AAA+_ATPase"/>
</dbReference>
<dbReference type="InterPro" id="IPR041445">
    <property type="entry name" value="AAA_lid_4"/>
</dbReference>
<dbReference type="InterPro" id="IPR004605">
    <property type="entry name" value="DNA_helicase_Holl-junc_RuvB"/>
</dbReference>
<dbReference type="InterPro" id="IPR027417">
    <property type="entry name" value="P-loop_NTPase"/>
</dbReference>
<dbReference type="InterPro" id="IPR008824">
    <property type="entry name" value="RuvB-like_N"/>
</dbReference>
<dbReference type="InterPro" id="IPR008823">
    <property type="entry name" value="RuvB_C"/>
</dbReference>
<dbReference type="InterPro" id="IPR036388">
    <property type="entry name" value="WH-like_DNA-bd_sf"/>
</dbReference>
<dbReference type="InterPro" id="IPR036390">
    <property type="entry name" value="WH_DNA-bd_sf"/>
</dbReference>
<dbReference type="NCBIfam" id="NF000868">
    <property type="entry name" value="PRK00080.1"/>
    <property type="match status" value="1"/>
</dbReference>
<dbReference type="NCBIfam" id="TIGR00635">
    <property type="entry name" value="ruvB"/>
    <property type="match status" value="1"/>
</dbReference>
<dbReference type="PANTHER" id="PTHR42848">
    <property type="match status" value="1"/>
</dbReference>
<dbReference type="PANTHER" id="PTHR42848:SF1">
    <property type="entry name" value="HOLLIDAY JUNCTION BRANCH MIGRATION COMPLEX SUBUNIT RUVB"/>
    <property type="match status" value="1"/>
</dbReference>
<dbReference type="Pfam" id="PF17864">
    <property type="entry name" value="AAA_lid_4"/>
    <property type="match status" value="1"/>
</dbReference>
<dbReference type="Pfam" id="PF05491">
    <property type="entry name" value="RuvB_C"/>
    <property type="match status" value="1"/>
</dbReference>
<dbReference type="Pfam" id="PF05496">
    <property type="entry name" value="RuvB_N"/>
    <property type="match status" value="1"/>
</dbReference>
<dbReference type="SMART" id="SM00382">
    <property type="entry name" value="AAA"/>
    <property type="match status" value="1"/>
</dbReference>
<dbReference type="SUPFAM" id="SSF52540">
    <property type="entry name" value="P-loop containing nucleoside triphosphate hydrolases"/>
    <property type="match status" value="1"/>
</dbReference>
<dbReference type="SUPFAM" id="SSF46785">
    <property type="entry name" value="Winged helix' DNA-binding domain"/>
    <property type="match status" value="1"/>
</dbReference>
<accession>Q839T5</accession>
<organism>
    <name type="scientific">Enterococcus faecalis (strain ATCC 700802 / V583)</name>
    <dbReference type="NCBI Taxonomy" id="226185"/>
    <lineage>
        <taxon>Bacteria</taxon>
        <taxon>Bacillati</taxon>
        <taxon>Bacillota</taxon>
        <taxon>Bacilli</taxon>
        <taxon>Lactobacillales</taxon>
        <taxon>Enterococcaceae</taxon>
        <taxon>Enterococcus</taxon>
    </lineage>
</organism>
<name>RUVB_ENTFA</name>